<feature type="chain" id="PRO_0000376985" description="Putative B3 domain-containing protein Os10g0537100">
    <location>
        <begin position="1"/>
        <end position="312"/>
    </location>
</feature>
<feature type="DNA-binding region" description="TF-B3" evidence="1">
    <location>
        <begin position="35"/>
        <end position="153"/>
    </location>
</feature>
<feature type="region of interest" description="Disordered" evidence="2">
    <location>
        <begin position="161"/>
        <end position="182"/>
    </location>
</feature>
<feature type="region of interest" description="Disordered" evidence="2">
    <location>
        <begin position="286"/>
        <end position="312"/>
    </location>
</feature>
<feature type="compositionally biased region" description="Basic residues" evidence="2">
    <location>
        <begin position="170"/>
        <end position="180"/>
    </location>
</feature>
<feature type="compositionally biased region" description="Low complexity" evidence="2">
    <location>
        <begin position="286"/>
        <end position="301"/>
    </location>
</feature>
<sequence>MEFTPISPPTRVAGGEEDSERGAAAWAVVEKEHMFEKVVTPSDVGKLNRLVIPKQHAERYFPLDAAAGAGGGGGGGGGGGGGKGLVLSFEDRTGKAWRFRYSYWNSSQSYVMTKGWSRFVKEKRLGAGDTVSFGRGLGDAARGRLFIDFRRRRQDAGSFMFPPTAAPPSHSHHHHQRHHPPLPSVPLCPWRDYTTAYGGGYGYGYGGGSTPASSRHVLFLRPQVPAAVVLKSVPVHVAATSAVQEAATTTRPKRVRLFGVNLDCPAAMDDDDDIAGAASRTAASSLLQLPSPSSSTSSSTAGKKMCSLDLGL</sequence>
<reference key="1">
    <citation type="journal article" date="2003" name="Science">
        <title>In-depth view of structure, activity, and evolution of rice chromosome 10.</title>
        <authorList>
            <person name="Yu Y."/>
            <person name="Rambo T."/>
            <person name="Currie J."/>
            <person name="Saski C."/>
            <person name="Kim H.-R."/>
            <person name="Collura K."/>
            <person name="Thompson S."/>
            <person name="Simmons J."/>
            <person name="Yang T.-J."/>
            <person name="Nah G."/>
            <person name="Patel A.J."/>
            <person name="Thurmond S."/>
            <person name="Henry D."/>
            <person name="Oates R."/>
            <person name="Palmer M."/>
            <person name="Pries G."/>
            <person name="Gibson J."/>
            <person name="Anderson H."/>
            <person name="Paradkar M."/>
            <person name="Crane L."/>
            <person name="Dale J."/>
            <person name="Carver M.B."/>
            <person name="Wood T."/>
            <person name="Frisch D."/>
            <person name="Engler F."/>
            <person name="Soderlund C."/>
            <person name="Palmer L.E."/>
            <person name="Teytelman L."/>
            <person name="Nascimento L."/>
            <person name="De la Bastide M."/>
            <person name="Spiegel L."/>
            <person name="Ware D."/>
            <person name="O'Shaughnessy A."/>
            <person name="Dike S."/>
            <person name="Dedhia N."/>
            <person name="Preston R."/>
            <person name="Huang E."/>
            <person name="Ferraro K."/>
            <person name="Kuit K."/>
            <person name="Miller B."/>
            <person name="Zutavern T."/>
            <person name="Katzenberger F."/>
            <person name="Muller S."/>
            <person name="Balija V."/>
            <person name="Martienssen R.A."/>
            <person name="Stein L."/>
            <person name="Minx P."/>
            <person name="Johnson D."/>
            <person name="Cordum H."/>
            <person name="Mardis E."/>
            <person name="Cheng Z."/>
            <person name="Jiang J."/>
            <person name="Wilson R."/>
            <person name="McCombie W.R."/>
            <person name="Wing R.A."/>
            <person name="Yuan Q."/>
            <person name="Ouyang S."/>
            <person name="Liu J."/>
            <person name="Jones K.M."/>
            <person name="Gansberger K."/>
            <person name="Moffat K."/>
            <person name="Hill J."/>
            <person name="Tsitrin T."/>
            <person name="Overton L."/>
            <person name="Bera J."/>
            <person name="Kim M."/>
            <person name="Jin S."/>
            <person name="Tallon L."/>
            <person name="Ciecko A."/>
            <person name="Pai G."/>
            <person name="Van Aken S."/>
            <person name="Utterback T."/>
            <person name="Reidmuller S."/>
            <person name="Bormann J."/>
            <person name="Feldblyum T."/>
            <person name="Hsiao J."/>
            <person name="Zismann V."/>
            <person name="Blunt S."/>
            <person name="de Vazeille A.R."/>
            <person name="Shaffer T."/>
            <person name="Koo H."/>
            <person name="Suh B."/>
            <person name="Yang Q."/>
            <person name="Haas B."/>
            <person name="Peterson J."/>
            <person name="Pertea M."/>
            <person name="Volfovsky N."/>
            <person name="Wortman J."/>
            <person name="White O."/>
            <person name="Salzberg S.L."/>
            <person name="Fraser C.M."/>
            <person name="Buell C.R."/>
            <person name="Messing J."/>
            <person name="Song R."/>
            <person name="Fuks G."/>
            <person name="Llaca V."/>
            <person name="Kovchak S."/>
            <person name="Young S."/>
            <person name="Bowers J.E."/>
            <person name="Paterson A.H."/>
            <person name="Johns M.A."/>
            <person name="Mao L."/>
            <person name="Pan H."/>
            <person name="Dean R.A."/>
        </authorList>
    </citation>
    <scope>NUCLEOTIDE SEQUENCE [LARGE SCALE GENOMIC DNA]</scope>
    <source>
        <strain>cv. Nipponbare</strain>
    </source>
</reference>
<reference key="2">
    <citation type="journal article" date="2005" name="Nature">
        <title>The map-based sequence of the rice genome.</title>
        <authorList>
            <consortium name="International rice genome sequencing project (IRGSP)"/>
        </authorList>
    </citation>
    <scope>NUCLEOTIDE SEQUENCE [LARGE SCALE GENOMIC DNA]</scope>
    <source>
        <strain>cv. Nipponbare</strain>
    </source>
</reference>
<reference key="3">
    <citation type="journal article" date="2013" name="Rice">
        <title>Improvement of the Oryza sativa Nipponbare reference genome using next generation sequence and optical map data.</title>
        <authorList>
            <person name="Kawahara Y."/>
            <person name="de la Bastide M."/>
            <person name="Hamilton J.P."/>
            <person name="Kanamori H."/>
            <person name="McCombie W.R."/>
            <person name="Ouyang S."/>
            <person name="Schwartz D.C."/>
            <person name="Tanaka T."/>
            <person name="Wu J."/>
            <person name="Zhou S."/>
            <person name="Childs K.L."/>
            <person name="Davidson R.M."/>
            <person name="Lin H."/>
            <person name="Quesada-Ocampo L."/>
            <person name="Vaillancourt B."/>
            <person name="Sakai H."/>
            <person name="Lee S.S."/>
            <person name="Kim J."/>
            <person name="Numa H."/>
            <person name="Itoh T."/>
            <person name="Buell C.R."/>
            <person name="Matsumoto T."/>
        </authorList>
    </citation>
    <scope>GENOME REANNOTATION</scope>
    <source>
        <strain>cv. Nipponbare</strain>
    </source>
</reference>
<gene>
    <name type="ordered locus">Os10g0537100</name>
    <name type="ordered locus">LOC_Os10g39190</name>
    <name type="ORF">OSJNBa0040D23.9</name>
</gene>
<proteinExistence type="inferred from homology"/>
<organism>
    <name type="scientific">Oryza sativa subsp. japonica</name>
    <name type="common">Rice</name>
    <dbReference type="NCBI Taxonomy" id="39947"/>
    <lineage>
        <taxon>Eukaryota</taxon>
        <taxon>Viridiplantae</taxon>
        <taxon>Streptophyta</taxon>
        <taxon>Embryophyta</taxon>
        <taxon>Tracheophyta</taxon>
        <taxon>Spermatophyta</taxon>
        <taxon>Magnoliopsida</taxon>
        <taxon>Liliopsida</taxon>
        <taxon>Poales</taxon>
        <taxon>Poaceae</taxon>
        <taxon>BOP clade</taxon>
        <taxon>Oryzoideae</taxon>
        <taxon>Oryzeae</taxon>
        <taxon>Oryzinae</taxon>
        <taxon>Oryza</taxon>
        <taxon>Oryza sativa</taxon>
    </lineage>
</organism>
<keyword id="KW-0238">DNA-binding</keyword>
<keyword id="KW-0539">Nucleus</keyword>
<keyword id="KW-1185">Reference proteome</keyword>
<keyword id="KW-0804">Transcription</keyword>
<keyword id="KW-0805">Transcription regulation</keyword>
<dbReference type="EMBL" id="AC074196">
    <property type="protein sequence ID" value="AAM76357.1"/>
    <property type="molecule type" value="Genomic_DNA"/>
</dbReference>
<dbReference type="EMBL" id="DP000086">
    <property type="protein sequence ID" value="AAP54816.1"/>
    <property type="molecule type" value="Genomic_DNA"/>
</dbReference>
<dbReference type="EMBL" id="AP014966">
    <property type="protein sequence ID" value="BAT11829.1"/>
    <property type="molecule type" value="Genomic_DNA"/>
</dbReference>
<dbReference type="SMR" id="Q8LNN8"/>
<dbReference type="FunCoup" id="Q8LNN8">
    <property type="interactions" value="35"/>
</dbReference>
<dbReference type="STRING" id="39947.Q8LNN8"/>
<dbReference type="PaxDb" id="39947-Q8LNN8"/>
<dbReference type="EnsemblPlants" id="Os10t0537100-00">
    <property type="protein sequence ID" value="Os10t0537100-00"/>
    <property type="gene ID" value="Os10g0537100"/>
</dbReference>
<dbReference type="Gramene" id="Os10t0537100-00">
    <property type="protein sequence ID" value="Os10t0537100-00"/>
    <property type="gene ID" value="Os10g0537100"/>
</dbReference>
<dbReference type="KEGG" id="osa:107278273"/>
<dbReference type="eggNOG" id="ENOG502R5M5">
    <property type="taxonomic scope" value="Eukaryota"/>
</dbReference>
<dbReference type="HOGENOM" id="CLU_038898_3_3_1"/>
<dbReference type="InParanoid" id="Q8LNN8"/>
<dbReference type="OMA" id="WVEKEHM"/>
<dbReference type="OrthoDB" id="685232at2759"/>
<dbReference type="Proteomes" id="UP000000763">
    <property type="component" value="Chromosome 10"/>
</dbReference>
<dbReference type="Proteomes" id="UP000059680">
    <property type="component" value="Chromosome 10"/>
</dbReference>
<dbReference type="GO" id="GO:0005634">
    <property type="term" value="C:nucleus"/>
    <property type="evidence" value="ECO:0007669"/>
    <property type="project" value="UniProtKB-SubCell"/>
</dbReference>
<dbReference type="GO" id="GO:0003677">
    <property type="term" value="F:DNA binding"/>
    <property type="evidence" value="ECO:0007669"/>
    <property type="project" value="UniProtKB-KW"/>
</dbReference>
<dbReference type="GO" id="GO:0003700">
    <property type="term" value="F:DNA-binding transcription factor activity"/>
    <property type="evidence" value="ECO:0007669"/>
    <property type="project" value="InterPro"/>
</dbReference>
<dbReference type="CDD" id="cd10017">
    <property type="entry name" value="B3_DNA"/>
    <property type="match status" value="1"/>
</dbReference>
<dbReference type="Gene3D" id="2.40.330.10">
    <property type="entry name" value="DNA-binding pseudobarrel domain"/>
    <property type="match status" value="1"/>
</dbReference>
<dbReference type="InterPro" id="IPR003340">
    <property type="entry name" value="B3_DNA-bd"/>
</dbReference>
<dbReference type="InterPro" id="IPR015300">
    <property type="entry name" value="DNA-bd_pseudobarrel_sf"/>
</dbReference>
<dbReference type="InterPro" id="IPR044800">
    <property type="entry name" value="LEC2-like"/>
</dbReference>
<dbReference type="PANTHER" id="PTHR31140:SF8">
    <property type="entry name" value="B3 DOMAIN-CONTAINING PROTEIN OS10G0537100-RELATED"/>
    <property type="match status" value="1"/>
</dbReference>
<dbReference type="PANTHER" id="PTHR31140">
    <property type="entry name" value="B3 DOMAIN-CONTAINING TRANSCRIPTION FACTOR ABI3"/>
    <property type="match status" value="1"/>
</dbReference>
<dbReference type="Pfam" id="PF02362">
    <property type="entry name" value="B3"/>
    <property type="match status" value="1"/>
</dbReference>
<dbReference type="SMART" id="SM01019">
    <property type="entry name" value="B3"/>
    <property type="match status" value="1"/>
</dbReference>
<dbReference type="SUPFAM" id="SSF101936">
    <property type="entry name" value="DNA-binding pseudobarrel domain"/>
    <property type="match status" value="1"/>
</dbReference>
<dbReference type="PROSITE" id="PS50863">
    <property type="entry name" value="B3"/>
    <property type="match status" value="1"/>
</dbReference>
<name>Y1071_ORYSJ</name>
<comment type="subcellular location">
    <subcellularLocation>
        <location evidence="1">Nucleus</location>
    </subcellularLocation>
</comment>
<evidence type="ECO:0000255" key="1">
    <source>
        <dbReference type="PROSITE-ProRule" id="PRU00326"/>
    </source>
</evidence>
<evidence type="ECO:0000256" key="2">
    <source>
        <dbReference type="SAM" id="MobiDB-lite"/>
    </source>
</evidence>
<accession>Q8LNN8</accession>
<accession>A0A0P0XX29</accession>
<protein>
    <recommendedName>
        <fullName>Putative B3 domain-containing protein Os10g0537100</fullName>
    </recommendedName>
</protein>